<accession>C3PP00</accession>
<reference key="1">
    <citation type="journal article" date="2009" name="BMC Genomics">
        <title>Analysis of the Rickettsia africae genome reveals that virulence acquisition in Rickettsia species may be explained by genome reduction.</title>
        <authorList>
            <person name="Fournier P.-E."/>
            <person name="El Karkouri K."/>
            <person name="Leroy Q."/>
            <person name="Robert C."/>
            <person name="Giumelli B."/>
            <person name="Renesto P."/>
            <person name="Socolovschi C."/>
            <person name="Parola P."/>
            <person name="Audic S."/>
            <person name="Raoult D."/>
        </authorList>
    </citation>
    <scope>NUCLEOTIDE SEQUENCE [LARGE SCALE GENOMIC DNA]</scope>
    <source>
        <strain>ESF-5</strain>
    </source>
</reference>
<dbReference type="EMBL" id="CP001612">
    <property type="protein sequence ID" value="ACP53660.1"/>
    <property type="molecule type" value="Genomic_DNA"/>
</dbReference>
<dbReference type="RefSeq" id="WP_010977464.1">
    <property type="nucleotide sequence ID" value="NC_012633.1"/>
</dbReference>
<dbReference type="SMR" id="C3PP00"/>
<dbReference type="GeneID" id="927822"/>
<dbReference type="KEGG" id="raf:RAF_ORF0781"/>
<dbReference type="HOGENOM" id="CLU_107907_1_0_5"/>
<dbReference type="Proteomes" id="UP000002305">
    <property type="component" value="Chromosome"/>
</dbReference>
<dbReference type="GO" id="GO:0005737">
    <property type="term" value="C:cytoplasm"/>
    <property type="evidence" value="ECO:0007669"/>
    <property type="project" value="UniProtKB-UniRule"/>
</dbReference>
<dbReference type="GO" id="GO:0009295">
    <property type="term" value="C:nucleoid"/>
    <property type="evidence" value="ECO:0007669"/>
    <property type="project" value="UniProtKB-SubCell"/>
</dbReference>
<dbReference type="GO" id="GO:0003700">
    <property type="term" value="F:DNA-binding transcription factor activity"/>
    <property type="evidence" value="ECO:0007669"/>
    <property type="project" value="UniProtKB-UniRule"/>
</dbReference>
<dbReference type="GO" id="GO:0000976">
    <property type="term" value="F:transcription cis-regulatory region binding"/>
    <property type="evidence" value="ECO:0007669"/>
    <property type="project" value="TreeGrafter"/>
</dbReference>
<dbReference type="GO" id="GO:2000143">
    <property type="term" value="P:negative regulation of DNA-templated transcription initiation"/>
    <property type="evidence" value="ECO:0007669"/>
    <property type="project" value="TreeGrafter"/>
</dbReference>
<dbReference type="CDD" id="cd16321">
    <property type="entry name" value="MraZ_C"/>
    <property type="match status" value="1"/>
</dbReference>
<dbReference type="CDD" id="cd16320">
    <property type="entry name" value="MraZ_N"/>
    <property type="match status" value="1"/>
</dbReference>
<dbReference type="Gene3D" id="3.40.1550.20">
    <property type="entry name" value="Transcriptional regulator MraZ domain"/>
    <property type="match status" value="1"/>
</dbReference>
<dbReference type="HAMAP" id="MF_01008">
    <property type="entry name" value="MraZ"/>
    <property type="match status" value="1"/>
</dbReference>
<dbReference type="InterPro" id="IPR003444">
    <property type="entry name" value="MraZ"/>
</dbReference>
<dbReference type="InterPro" id="IPR035644">
    <property type="entry name" value="MraZ_C"/>
</dbReference>
<dbReference type="InterPro" id="IPR020603">
    <property type="entry name" value="MraZ_dom"/>
</dbReference>
<dbReference type="InterPro" id="IPR035642">
    <property type="entry name" value="MraZ_N"/>
</dbReference>
<dbReference type="InterPro" id="IPR038619">
    <property type="entry name" value="MraZ_sf"/>
</dbReference>
<dbReference type="InterPro" id="IPR007159">
    <property type="entry name" value="SpoVT-AbrB_dom"/>
</dbReference>
<dbReference type="InterPro" id="IPR037914">
    <property type="entry name" value="SpoVT-AbrB_sf"/>
</dbReference>
<dbReference type="NCBIfam" id="NF001475">
    <property type="entry name" value="PRK00326.2-1"/>
    <property type="match status" value="1"/>
</dbReference>
<dbReference type="PANTHER" id="PTHR34701">
    <property type="entry name" value="TRANSCRIPTIONAL REGULATOR MRAZ"/>
    <property type="match status" value="1"/>
</dbReference>
<dbReference type="PANTHER" id="PTHR34701:SF1">
    <property type="entry name" value="TRANSCRIPTIONAL REGULATOR MRAZ"/>
    <property type="match status" value="1"/>
</dbReference>
<dbReference type="Pfam" id="PF02381">
    <property type="entry name" value="MraZ"/>
    <property type="match status" value="1"/>
</dbReference>
<dbReference type="SUPFAM" id="SSF89447">
    <property type="entry name" value="AbrB/MazE/MraZ-like"/>
    <property type="match status" value="1"/>
</dbReference>
<dbReference type="PROSITE" id="PS51740">
    <property type="entry name" value="SPOVT_ABRB"/>
    <property type="match status" value="2"/>
</dbReference>
<gene>
    <name evidence="1" type="primary">mraZ</name>
    <name type="ordered locus">RAF_ORF0781</name>
</gene>
<protein>
    <recommendedName>
        <fullName>Transcriptional regulator MraZ</fullName>
    </recommendedName>
</protein>
<evidence type="ECO:0000255" key="1">
    <source>
        <dbReference type="HAMAP-Rule" id="MF_01008"/>
    </source>
</evidence>
<evidence type="ECO:0000255" key="2">
    <source>
        <dbReference type="PROSITE-ProRule" id="PRU01076"/>
    </source>
</evidence>
<proteinExistence type="inferred from homology"/>
<comment type="subunit">
    <text evidence="1">Forms oligomers.</text>
</comment>
<comment type="subcellular location">
    <subcellularLocation>
        <location evidence="1">Cytoplasm</location>
        <location evidence="1">Nucleoid</location>
    </subcellularLocation>
</comment>
<comment type="similarity">
    <text evidence="1">Belongs to the MraZ family.</text>
</comment>
<keyword id="KW-0963">Cytoplasm</keyword>
<keyword id="KW-0238">DNA-binding</keyword>
<keyword id="KW-0677">Repeat</keyword>
<keyword id="KW-0804">Transcription</keyword>
<keyword id="KW-0805">Transcription regulation</keyword>
<organism>
    <name type="scientific">Rickettsia africae (strain ESF-5)</name>
    <dbReference type="NCBI Taxonomy" id="347255"/>
    <lineage>
        <taxon>Bacteria</taxon>
        <taxon>Pseudomonadati</taxon>
        <taxon>Pseudomonadota</taxon>
        <taxon>Alphaproteobacteria</taxon>
        <taxon>Rickettsiales</taxon>
        <taxon>Rickettsiaceae</taxon>
        <taxon>Rickettsieae</taxon>
        <taxon>Rickettsia</taxon>
        <taxon>spotted fever group</taxon>
    </lineage>
</organism>
<sequence>MNVFLSKYVNGVDKKSRVSVPANYRAVLGKELFNGVIAYPSIRNNCIEVCGISHIEKLRQMIETLDPYSEERDAFETMIFGEAVQLSFDGEGRVILPQSLMKHAGIEEQACFVGKGVIFEIWQPQNFEKYLNAAQKIAHEKRLTLRNAH</sequence>
<name>MRAZ_RICAE</name>
<feature type="chain" id="PRO_1000213183" description="Transcriptional regulator MraZ">
    <location>
        <begin position="1"/>
        <end position="149"/>
    </location>
</feature>
<feature type="domain" description="SpoVT-AbrB 1" evidence="2">
    <location>
        <begin position="7"/>
        <end position="54"/>
    </location>
</feature>
<feature type="domain" description="SpoVT-AbrB 2" evidence="2">
    <location>
        <begin position="83"/>
        <end position="126"/>
    </location>
</feature>